<comment type="function">
    <text evidence="6 8 9">Calcium-dependent lectin involved in innate immune defense. Binds mannose, fucose and N-acetylglucosamine on different microorganisms and activates the lectin complement pathway. Binds to late apoptotic cells, as well as to apoptotic blebs and to necrotic cells, but not to early apoptotic cells, facilitating their uptake by macrophages. According to some authors, it only binds mannose (PubMed:8602463).</text>
</comment>
<comment type="subunit">
    <text evidence="2 9">Interacts with MASP1 and MASP2. Interacts with MEP1A and MEP1B and may inhibit their catalytic activity (By similarity). Forms oligomeric complexes of 2 or 3 homotrimers.</text>
</comment>
<comment type="subcellular location">
    <subcellularLocation>
        <location evidence="2">Secreted</location>
    </subcellularLocation>
</comment>
<comment type="tissue specificity">
    <text evidence="6 7 8">Expressed in liver. Weakly expressed in kidney and testis.</text>
</comment>
<comment type="domain">
    <text evidence="1">The coiled-coil domain mediates trimerization.</text>
</comment>
<dbReference type="EMBL" id="AF164576">
    <property type="protein sequence ID" value="AAD45377.1"/>
    <property type="molecule type" value="mRNA"/>
</dbReference>
<dbReference type="EMBL" id="EF028163">
    <property type="protein sequence ID" value="ABK78779.1"/>
    <property type="molecule type" value="Genomic_DNA"/>
</dbReference>
<dbReference type="RefSeq" id="NP_999290.1">
    <property type="nucleotide sequence ID" value="NM_214125.1"/>
</dbReference>
<dbReference type="SMR" id="Q9XSW3"/>
<dbReference type="FunCoup" id="Q9XSW3">
    <property type="interactions" value="179"/>
</dbReference>
<dbReference type="STRING" id="9823.ENSSSCP00000063642"/>
<dbReference type="PeptideAtlas" id="Q9XSW3"/>
<dbReference type="GeneID" id="397230"/>
<dbReference type="KEGG" id="ssc:397230"/>
<dbReference type="CTD" id="4153"/>
<dbReference type="InParanoid" id="Q9XSW3"/>
<dbReference type="OrthoDB" id="10255512at2759"/>
<dbReference type="Proteomes" id="UP000008227">
    <property type="component" value="Unplaced"/>
</dbReference>
<dbReference type="Proteomes" id="UP000314985">
    <property type="component" value="Unplaced"/>
</dbReference>
<dbReference type="Proteomes" id="UP000694570">
    <property type="component" value="Unplaced"/>
</dbReference>
<dbReference type="Proteomes" id="UP000694571">
    <property type="component" value="Unplaced"/>
</dbReference>
<dbReference type="Proteomes" id="UP000694720">
    <property type="component" value="Unplaced"/>
</dbReference>
<dbReference type="Proteomes" id="UP000694722">
    <property type="component" value="Unplaced"/>
</dbReference>
<dbReference type="Proteomes" id="UP000694723">
    <property type="component" value="Unplaced"/>
</dbReference>
<dbReference type="Proteomes" id="UP000694724">
    <property type="component" value="Unplaced"/>
</dbReference>
<dbReference type="Proteomes" id="UP000694725">
    <property type="component" value="Unplaced"/>
</dbReference>
<dbReference type="Proteomes" id="UP000694726">
    <property type="component" value="Unplaced"/>
</dbReference>
<dbReference type="Proteomes" id="UP000694727">
    <property type="component" value="Unplaced"/>
</dbReference>
<dbReference type="Proteomes" id="UP000694728">
    <property type="component" value="Unplaced"/>
</dbReference>
<dbReference type="GO" id="GO:0005581">
    <property type="term" value="C:collagen trimer"/>
    <property type="evidence" value="ECO:0007669"/>
    <property type="project" value="UniProtKB-KW"/>
</dbReference>
<dbReference type="GO" id="GO:0005615">
    <property type="term" value="C:extracellular space"/>
    <property type="evidence" value="ECO:0000318"/>
    <property type="project" value="GO_Central"/>
</dbReference>
<dbReference type="GO" id="GO:0005771">
    <property type="term" value="C:multivesicular body"/>
    <property type="evidence" value="ECO:0000318"/>
    <property type="project" value="GO_Central"/>
</dbReference>
<dbReference type="GO" id="GO:0005537">
    <property type="term" value="F:D-mannose binding"/>
    <property type="evidence" value="ECO:0007669"/>
    <property type="project" value="UniProtKB-KW"/>
</dbReference>
<dbReference type="GO" id="GO:0006958">
    <property type="term" value="P:complement activation, classical pathway"/>
    <property type="evidence" value="ECO:0007669"/>
    <property type="project" value="UniProtKB-KW"/>
</dbReference>
<dbReference type="GO" id="GO:0001867">
    <property type="term" value="P:complement activation, lectin pathway"/>
    <property type="evidence" value="ECO:0007669"/>
    <property type="project" value="UniProtKB-KW"/>
</dbReference>
<dbReference type="GO" id="GO:0050766">
    <property type="term" value="P:positive regulation of phagocytosis"/>
    <property type="evidence" value="ECO:0000318"/>
    <property type="project" value="GO_Central"/>
</dbReference>
<dbReference type="GO" id="GO:0043129">
    <property type="term" value="P:surfactant homeostasis"/>
    <property type="evidence" value="ECO:0000318"/>
    <property type="project" value="GO_Central"/>
</dbReference>
<dbReference type="FunFam" id="3.10.100.10:FF:000088">
    <property type="entry name" value="Mannose-binding protein A"/>
    <property type="match status" value="1"/>
</dbReference>
<dbReference type="Gene3D" id="3.10.100.10">
    <property type="entry name" value="Mannose-Binding Protein A, subunit A"/>
    <property type="match status" value="1"/>
</dbReference>
<dbReference type="InterPro" id="IPR001304">
    <property type="entry name" value="C-type_lectin-like"/>
</dbReference>
<dbReference type="InterPro" id="IPR016186">
    <property type="entry name" value="C-type_lectin-like/link_sf"/>
</dbReference>
<dbReference type="InterPro" id="IPR018378">
    <property type="entry name" value="C-type_lectin_CS"/>
</dbReference>
<dbReference type="InterPro" id="IPR051077">
    <property type="entry name" value="Ca-dependent_lectin"/>
</dbReference>
<dbReference type="InterPro" id="IPR008160">
    <property type="entry name" value="Collagen"/>
</dbReference>
<dbReference type="InterPro" id="IPR016187">
    <property type="entry name" value="CTDL_fold"/>
</dbReference>
<dbReference type="PANTHER" id="PTHR24024:SF34">
    <property type="entry name" value="MANNOSE-BINDING PROTEIN C"/>
    <property type="match status" value="1"/>
</dbReference>
<dbReference type="PANTHER" id="PTHR24024">
    <property type="entry name" value="PULMONARY SURFACTANT-ASSOCIATED PROTEIN A"/>
    <property type="match status" value="1"/>
</dbReference>
<dbReference type="Pfam" id="PF01391">
    <property type="entry name" value="Collagen"/>
    <property type="match status" value="1"/>
</dbReference>
<dbReference type="Pfam" id="PF00059">
    <property type="entry name" value="Lectin_C"/>
    <property type="match status" value="1"/>
</dbReference>
<dbReference type="SMART" id="SM00034">
    <property type="entry name" value="CLECT"/>
    <property type="match status" value="1"/>
</dbReference>
<dbReference type="SUPFAM" id="SSF56436">
    <property type="entry name" value="C-type lectin-like"/>
    <property type="match status" value="1"/>
</dbReference>
<dbReference type="PROSITE" id="PS00615">
    <property type="entry name" value="C_TYPE_LECTIN_1"/>
    <property type="match status" value="1"/>
</dbReference>
<dbReference type="PROSITE" id="PS50041">
    <property type="entry name" value="C_TYPE_LECTIN_2"/>
    <property type="match status" value="1"/>
</dbReference>
<organism>
    <name type="scientific">Sus scrofa</name>
    <name type="common">Pig</name>
    <dbReference type="NCBI Taxonomy" id="9823"/>
    <lineage>
        <taxon>Eukaryota</taxon>
        <taxon>Metazoa</taxon>
        <taxon>Chordata</taxon>
        <taxon>Craniata</taxon>
        <taxon>Vertebrata</taxon>
        <taxon>Euteleostomi</taxon>
        <taxon>Mammalia</taxon>
        <taxon>Eutheria</taxon>
        <taxon>Laurasiatheria</taxon>
        <taxon>Artiodactyla</taxon>
        <taxon>Suina</taxon>
        <taxon>Suidae</taxon>
        <taxon>Sus</taxon>
    </lineage>
</organism>
<keyword id="KW-0106">Calcium</keyword>
<keyword id="KW-0175">Coiled coil</keyword>
<keyword id="KW-0176">Collagen</keyword>
<keyword id="KW-1018">Complement activation lectin pathway</keyword>
<keyword id="KW-0180">Complement pathway</keyword>
<keyword id="KW-0903">Direct protein sequencing</keyword>
<keyword id="KW-1015">Disulfide bond</keyword>
<keyword id="KW-0379">Hydroxylation</keyword>
<keyword id="KW-0391">Immunity</keyword>
<keyword id="KW-0399">Innate immunity</keyword>
<keyword id="KW-0430">Lectin</keyword>
<keyword id="KW-0465">Mannose-binding</keyword>
<keyword id="KW-1185">Reference proteome</keyword>
<keyword id="KW-0677">Repeat</keyword>
<keyword id="KW-0964">Secreted</keyword>
<keyword id="KW-0732">Signal</keyword>
<reference evidence="14 15" key="1">
    <citation type="journal article" date="2001" name="Immunology">
        <title>Isolation, cloning and functional characterization of porcine mannose-binding lectin.</title>
        <authorList>
            <person name="Agah A."/>
            <person name="Montalto M.C."/>
            <person name="Young K."/>
            <person name="Stahl G.L."/>
        </authorList>
    </citation>
    <scope>NUCLEOTIDE SEQUENCE [MRNA]</scope>
    <scope>PROTEIN SEQUENCE OF 94-161 AND 195-219</scope>
    <scope>FUNCTION</scope>
    <scope>TISSUE SPECIFICITY</scope>
    <source>
        <tissue evidence="15">Liver</tissue>
        <tissue evidence="6">Serum</tissue>
    </source>
</reference>
<reference evidence="14 16" key="2">
    <citation type="journal article" date="2007" name="Dev. Comp. Immunol.">
        <title>Gene polymorphisms associated with reduced hepatic expression of porcine mannan-binding lectin C.</title>
        <authorList>
            <person name="Lillie B.N."/>
            <person name="Keirstead N.D."/>
            <person name="Squires E.J."/>
            <person name="Hayes M.A."/>
        </authorList>
    </citation>
    <scope>NUCLEOTIDE SEQUENCE [GENOMIC DNA] OF 1-28</scope>
    <scope>TISSUE SPECIFICITY</scope>
    <source>
        <strain evidence="7">Landrace</strain>
    </source>
</reference>
<reference evidence="14" key="3">
    <citation type="journal article" date="1996" name="Scand. J. Immunol.">
        <title>Isolation and characterization of porcine mannan-binding proteins of different size and ultrastructure.</title>
        <authorList>
            <person name="Storgaard P."/>
            <person name="Nielsen E.H."/>
            <person name="Andersen O."/>
            <person name="Skriver E."/>
            <person name="Mortensen H."/>
            <person name="Hojrup P."/>
            <person name="Leslie G."/>
            <person name="Holmskow U."/>
            <person name="Svehag S.E."/>
        </authorList>
    </citation>
    <scope>PROTEIN SEQUENCE OF 19-44</scope>
    <scope>FUNCTION</scope>
    <scope>SUBUNIT</scope>
    <source>
        <tissue evidence="9">Serum</tissue>
    </source>
</reference>
<reference evidence="14" key="4">
    <citation type="journal article" date="2007" name="Int. J. Immunogenet.">
        <title>Molecular genetic analysis of porcine mannose-binding lectin genes, MBL1 and MBL2, and their association with complement activity.</title>
        <authorList>
            <person name="Phatsara C."/>
            <person name="Jennen D.G."/>
            <person name="Ponsuksili S."/>
            <person name="Murani E."/>
            <person name="Tesfaye D."/>
            <person name="Schellander K."/>
            <person name="Wimmers K."/>
        </authorList>
    </citation>
    <scope>FUNCTION</scope>
    <scope>TISSUE SPECIFICITY</scope>
</reference>
<sequence length="240" mass="25523">MSLFPSLHLLLLIVMTASHTETENCEDIQNTCLVISCDSPGINGLPGKDGLDGAKGEKGEPGQGLIGLQGLPGMVGPQGSPGIPGLPGLKGQKGDSGIDPGNSLANLRSELDNIKKWLIFAQGKQVGKKLYLTNGKKMSFNGVKALCAQFQASVATPTNSRENQAIQELAGTEAFLGITDEYTEGQFVDLTGKRVRYQNWNDGEPNNADSAEHCVEILKDGKWNDIFCSSQLSAVCEFPA</sequence>
<protein>
    <recommendedName>
        <fullName evidence="2">Mannose-binding protein C</fullName>
        <shortName evidence="2">MBP-C</shortName>
    </recommendedName>
    <alternativeName>
        <fullName evidence="13">27 kDa mannan-binding protein monomeric subunit</fullName>
        <shortName evidence="13">pMBP-27</shortName>
    </alternativeName>
    <alternativeName>
        <fullName evidence="10 15">Mannose-binding lectin</fullName>
        <shortName evidence="10">MBL</shortName>
    </alternativeName>
</protein>
<feature type="signal peptide" evidence="9">
    <location>
        <begin position="1"/>
        <end position="18"/>
    </location>
</feature>
<feature type="chain" id="PRO_0000397216" description="Mannose-binding protein C" evidence="9">
    <location>
        <begin position="19"/>
        <end position="240"/>
    </location>
</feature>
<feature type="domain" description="Collagen-like 1" evidence="3">
    <location>
        <begin position="39"/>
        <end position="61"/>
    </location>
</feature>
<feature type="domain" description="Collagen-like 2" evidence="3">
    <location>
        <begin position="67"/>
        <end position="97"/>
    </location>
</feature>
<feature type="domain" description="C-type lectin" evidence="4">
    <location>
        <begin position="126"/>
        <end position="237"/>
    </location>
</feature>
<feature type="region of interest" description="Disordered" evidence="5">
    <location>
        <begin position="48"/>
        <end position="102"/>
    </location>
</feature>
<feature type="coiled-coil region" evidence="1">
    <location>
        <begin position="104"/>
        <end position="122"/>
    </location>
</feature>
<feature type="compositionally biased region" description="Basic and acidic residues" evidence="5">
    <location>
        <begin position="49"/>
        <end position="60"/>
    </location>
</feature>
<feature type="modified residue" description="Hydroxyproline" evidence="2">
    <location>
        <position position="46"/>
    </location>
</feature>
<feature type="modified residue" description="Hydroxyproline" evidence="2">
    <location>
        <position position="72"/>
    </location>
</feature>
<feature type="modified residue" description="Hydroxyproline" evidence="2">
    <location>
        <position position="81"/>
    </location>
</feature>
<feature type="modified residue" description="Hydroxyproline" evidence="2">
    <location>
        <position position="87"/>
    </location>
</feature>
<feature type="disulfide bond" evidence="2 4">
    <location>
        <begin position="147"/>
        <end position="236"/>
    </location>
</feature>
<feature type="disulfide bond" evidence="2 4">
    <location>
        <begin position="214"/>
        <end position="228"/>
    </location>
</feature>
<feature type="sequence conflict" description="In Ref. 3; AA sequence." evidence="14" ref="3">
    <original>H</original>
    <variation>S</variation>
    <location>
        <position position="19"/>
    </location>
</feature>
<feature type="sequence conflict" description="In Ref. 3; AA sequence." evidence="14" ref="3">
    <original>I</original>
    <variation>K</variation>
    <location>
        <position position="28"/>
    </location>
</feature>
<feature type="sequence conflict" description="In Ref. 3; AA sequence." evidence="14" ref="3">
    <original>S</original>
    <variation>D</variation>
    <location>
        <position position="39"/>
    </location>
</feature>
<name>MBL2_PIG</name>
<accession>Q9XSW3</accession>
<accession>A0SVI8</accession>
<accession>Q9TR20</accession>
<proteinExistence type="evidence at protein level"/>
<gene>
    <name evidence="11 12" type="primary">MBL2</name>
</gene>
<evidence type="ECO:0000250" key="1"/>
<evidence type="ECO:0000250" key="2">
    <source>
        <dbReference type="UniProtKB" id="P11226"/>
    </source>
</evidence>
<evidence type="ECO:0000255" key="3"/>
<evidence type="ECO:0000255" key="4">
    <source>
        <dbReference type="PROSITE-ProRule" id="PRU00040"/>
    </source>
</evidence>
<evidence type="ECO:0000256" key="5">
    <source>
        <dbReference type="SAM" id="MobiDB-lite"/>
    </source>
</evidence>
<evidence type="ECO:0000269" key="6">
    <source>
    </source>
</evidence>
<evidence type="ECO:0000269" key="7">
    <source>
    </source>
</evidence>
<evidence type="ECO:0000269" key="8">
    <source>
    </source>
</evidence>
<evidence type="ECO:0000269" key="9">
    <source>
    </source>
</evidence>
<evidence type="ECO:0000303" key="10">
    <source>
    </source>
</evidence>
<evidence type="ECO:0000303" key="11">
    <source>
    </source>
</evidence>
<evidence type="ECO:0000303" key="12">
    <source>
    </source>
</evidence>
<evidence type="ECO:0000303" key="13">
    <source>
    </source>
</evidence>
<evidence type="ECO:0000305" key="14"/>
<evidence type="ECO:0000312" key="15">
    <source>
        <dbReference type="EMBL" id="AAD45377.1"/>
    </source>
</evidence>
<evidence type="ECO:0000312" key="16">
    <source>
        <dbReference type="EMBL" id="ABK78779.1"/>
    </source>
</evidence>